<name>PVK2_HOPMA</name>
<keyword id="KW-0027">Amidation</keyword>
<keyword id="KW-0903">Direct protein sequencing</keyword>
<keyword id="KW-0527">Neuropeptide</keyword>
<keyword id="KW-0964">Secreted</keyword>
<feature type="peptide" id="PRO_0000395588" description="Periviscerokinin-2" evidence="4">
    <location>
        <begin position="1"/>
        <end position="11"/>
    </location>
</feature>
<feature type="modified residue" description="Valine amide" evidence="4">
    <location>
        <position position="11"/>
    </location>
</feature>
<feature type="unsure residue" description="L or I" evidence="4">
    <location>
        <position position="5"/>
    </location>
</feature>
<feature type="unsure residue" description="I or L" evidence="4">
    <location>
        <position position="6"/>
    </location>
</feature>
<proteinExistence type="evidence at protein level"/>
<organism>
    <name type="scientific">Hoplocorypha cf. macra (strain RK-2010)</name>
    <name type="common">Praying mantis</name>
    <dbReference type="NCBI Taxonomy" id="765347"/>
    <lineage>
        <taxon>Eukaryota</taxon>
        <taxon>Metazoa</taxon>
        <taxon>Ecdysozoa</taxon>
        <taxon>Arthropoda</taxon>
        <taxon>Hexapoda</taxon>
        <taxon>Insecta</taxon>
        <taxon>Pterygota</taxon>
        <taxon>Neoptera</taxon>
        <taxon>Polyneoptera</taxon>
        <taxon>Dictyoptera</taxon>
        <taxon>Mantodea</taxon>
        <taxon>Eumantodea</taxon>
        <taxon>Thespoidea</taxon>
        <taxon>Thespidae</taxon>
        <taxon>Hoplocoryphinae</taxon>
        <taxon>Hoplocorypha</taxon>
    </lineage>
</organism>
<protein>
    <recommendedName>
        <fullName evidence="5">Periviscerokinin-2</fullName>
    </recommendedName>
</protein>
<evidence type="ECO:0000250" key="1">
    <source>
        <dbReference type="UniProtKB" id="P83923"/>
    </source>
</evidence>
<evidence type="ECO:0000250" key="2">
    <source>
        <dbReference type="UniProtKB" id="P84375"/>
    </source>
</evidence>
<evidence type="ECO:0000255" key="3"/>
<evidence type="ECO:0000269" key="4">
    <source>
    </source>
</evidence>
<evidence type="ECO:0000303" key="5">
    <source>
    </source>
</evidence>
<evidence type="ECO:0000305" key="6"/>
<comment type="function">
    <text evidence="1">Mediates visceral muscle contractile activity (myotropic activity).</text>
</comment>
<comment type="subcellular location">
    <subcellularLocation>
        <location evidence="2">Secreted</location>
    </subcellularLocation>
</comment>
<comment type="mass spectrometry" mass="1086.6" method="MALDI" evidence="4"/>
<comment type="similarity">
    <text evidence="3">Belongs to the periviscerokinin family.</text>
</comment>
<reference evidence="6" key="1">
    <citation type="journal article" date="2010" name="Peptides">
        <title>CAPA-peptides of praying mantids (Mantodea).</title>
        <authorList>
            <person name="Koehler R."/>
            <person name="Predel R."/>
        </authorList>
    </citation>
    <scope>PROTEIN SEQUENCE</scope>
    <scope>MASS SPECTROMETRY</scope>
    <scope>AMIDATION AT VAL-11</scope>
    <source>
        <tissue evidence="4">Abdominal perisympathetic organs</tissue>
    </source>
</reference>
<sequence length="11" mass="1087">GASGLIAFPRV</sequence>
<dbReference type="GO" id="GO:0005576">
    <property type="term" value="C:extracellular region"/>
    <property type="evidence" value="ECO:0007669"/>
    <property type="project" value="UniProtKB-SubCell"/>
</dbReference>
<dbReference type="GO" id="GO:0007218">
    <property type="term" value="P:neuropeptide signaling pathway"/>
    <property type="evidence" value="ECO:0007669"/>
    <property type="project" value="UniProtKB-KW"/>
</dbReference>
<dbReference type="InterPro" id="IPR013231">
    <property type="entry name" value="Periviscerokinin"/>
</dbReference>
<dbReference type="Pfam" id="PF08259">
    <property type="entry name" value="Periviscerokin"/>
    <property type="match status" value="1"/>
</dbReference>
<accession>P86658</accession>